<comment type="function">
    <text>Polymerase that creates the 3'-poly(A) tail of mRNA's.</text>
</comment>
<comment type="catalytic activity">
    <reaction>
        <text>RNA(n) + ATP = RNA(n)-3'-adenine ribonucleotide + diphosphate</text>
        <dbReference type="Rhea" id="RHEA:11332"/>
        <dbReference type="Rhea" id="RHEA-COMP:14527"/>
        <dbReference type="Rhea" id="RHEA-COMP:17347"/>
        <dbReference type="ChEBI" id="CHEBI:30616"/>
        <dbReference type="ChEBI" id="CHEBI:33019"/>
        <dbReference type="ChEBI" id="CHEBI:140395"/>
        <dbReference type="ChEBI" id="CHEBI:173115"/>
        <dbReference type="EC" id="2.7.7.19"/>
    </reaction>
</comment>
<comment type="subunit">
    <text evidence="1">Heterodimer of a large (catalytic) subunit and a small (regulatory) subunit.</text>
</comment>
<comment type="similarity">
    <text evidence="2">Belongs to the poxviridae poly(A) polymerase catalytic subunit family.</text>
</comment>
<organism>
    <name type="scientific">Fowlpox virus (strain NVSL)</name>
    <name type="common">FPV</name>
    <dbReference type="NCBI Taxonomy" id="928301"/>
    <lineage>
        <taxon>Viruses</taxon>
        <taxon>Varidnaviria</taxon>
        <taxon>Bamfordvirae</taxon>
        <taxon>Nucleocytoviricota</taxon>
        <taxon>Pokkesviricetes</taxon>
        <taxon>Chitovirales</taxon>
        <taxon>Poxviridae</taxon>
        <taxon>Chordopoxvirinae</taxon>
        <taxon>Avipoxvirus</taxon>
        <taxon>Fowlpox virus</taxon>
    </lineage>
</organism>
<gene>
    <name type="primary">PAPL</name>
    <name type="ordered locus">FPV102</name>
</gene>
<name>PAP1_FOWPN</name>
<proteinExistence type="inferred from homology"/>
<protein>
    <recommendedName>
        <fullName>Poly(A) polymerase catalytic subunit</fullName>
        <ecNumber>2.7.7.19</ecNumber>
    </recommendedName>
    <alternativeName>
        <fullName>Poly(A) polymerase large subunit</fullName>
        <shortName>PAP-L</shortName>
    </alternativeName>
    <alternativeName>
        <fullName>VP55</fullName>
    </alternativeName>
</protein>
<reference key="1">
    <citation type="journal article" date="2000" name="J. Virol.">
        <title>The genome of fowlpox virus.</title>
        <authorList>
            <person name="Afonso C.L."/>
            <person name="Tulman E.R."/>
            <person name="Lu Z."/>
            <person name="Zsak L."/>
            <person name="Kutish G.F."/>
            <person name="Rock D.L."/>
        </authorList>
    </citation>
    <scope>NUCLEOTIDE SEQUENCE [LARGE SCALE GENOMIC DNA]</scope>
</reference>
<accession>P0DTA7</accession>
<accession>Q70H53</accession>
<accession>Q9J5B8</accession>
<organismHost>
    <name type="scientific">Vertebrata</name>
    <dbReference type="NCBI Taxonomy" id="7742"/>
</organismHost>
<evidence type="ECO:0000250" key="1"/>
<evidence type="ECO:0000305" key="2"/>
<keyword id="KW-0067">ATP-binding</keyword>
<keyword id="KW-0507">mRNA processing</keyword>
<keyword id="KW-0547">Nucleotide-binding</keyword>
<keyword id="KW-1185">Reference proteome</keyword>
<keyword id="KW-0804">Transcription</keyword>
<keyword id="KW-0808">Transferase</keyword>
<sequence>MERSRQVYYIINEYLGRHPSSTEYQVLKHQVEKISKINNFNKETFFFLLKKNKNKFFKDLELSDDLLKKRIDEYFSKQKHAKRLGNLFAIMELQKILISSFTKTIGILTTKVPEYYHSTIKLEYSSMEKIADDILDSYNVVEPSKEVKGRHKVSDLVGHVYKIMEEYLRRHSNSCLCYGSYSLHFLNNKIEYGDIDVLQTNARTFLINIAFLIKFITGRRIVLLKVPFLKNYVIMHDEETNHVMDTFNIREKTMNMIPKIMIDNMYIVDPCIQLLNMIKMLSQIDRLEELQAKFEKLSVRLGTLLEYTRYRYSIPLDSESILEVRAKLDKDKRKITVDFKKYKLNYIKCYFYLDEVELKKFISKNSGLDEYEDFEAVTNSEYAIRNKTMYTYFSNTALMRSENEIHPITINALTSHALLYHVITRKFYDDLLGDLVRSLMIVEKVPVFKIIPRDKKQGRHTIIDIEKDIIFH</sequence>
<feature type="chain" id="PRO_0000099109" description="Poly(A) polymerase catalytic subunit">
    <location>
        <begin position="1"/>
        <end position="472"/>
    </location>
</feature>
<feature type="active site" evidence="1">
    <location>
        <position position="194"/>
    </location>
</feature>
<feature type="active site" evidence="1">
    <location>
        <position position="196"/>
    </location>
</feature>
<dbReference type="EC" id="2.7.7.19"/>
<dbReference type="EMBL" id="AF198100">
    <property type="protein sequence ID" value="AAF44446.1"/>
    <property type="molecule type" value="Genomic_DNA"/>
</dbReference>
<dbReference type="RefSeq" id="NP_039065.1">
    <property type="nucleotide sequence ID" value="NC_002188.1"/>
</dbReference>
<dbReference type="SMR" id="P0DTA7"/>
<dbReference type="GeneID" id="1486650"/>
<dbReference type="KEGG" id="vg:1486650"/>
<dbReference type="Proteomes" id="UP000008597">
    <property type="component" value="Segment"/>
</dbReference>
<dbReference type="GO" id="GO:0005524">
    <property type="term" value="F:ATP binding"/>
    <property type="evidence" value="ECO:0007669"/>
    <property type="project" value="UniProtKB-KW"/>
</dbReference>
<dbReference type="GO" id="GO:1990817">
    <property type="term" value="F:poly(A) RNA polymerase activity"/>
    <property type="evidence" value="ECO:0007669"/>
    <property type="project" value="UniProtKB-EC"/>
</dbReference>
<dbReference type="GO" id="GO:0006397">
    <property type="term" value="P:mRNA processing"/>
    <property type="evidence" value="ECO:0007669"/>
    <property type="project" value="UniProtKB-KW"/>
</dbReference>
<dbReference type="CDD" id="cd20919">
    <property type="entry name" value="polyA_pol_Pox"/>
    <property type="match status" value="1"/>
</dbReference>
<dbReference type="Gene3D" id="1.20.1270.320">
    <property type="entry name" value="Poxvirus poly(A) polymerase, N domain"/>
    <property type="match status" value="1"/>
</dbReference>
<dbReference type="Gene3D" id="3.30.460.60">
    <property type="entry name" value="Poxvirus poly(A) polymerase, nucleotidyltransferase domain"/>
    <property type="match status" value="1"/>
</dbReference>
<dbReference type="InterPro" id="IPR004976">
    <property type="entry name" value="PolyA_pol_cat_Poxvir"/>
</dbReference>
<dbReference type="InterPro" id="IPR037265">
    <property type="entry name" value="PolyA_pol_cat_sf"/>
</dbReference>
<dbReference type="InterPro" id="IPR024231">
    <property type="entry name" value="PolyA_pol_nucTrfase_Poxvir"/>
</dbReference>
<dbReference type="InterPro" id="IPR038419">
    <property type="entry name" value="PolyA_pol_nucTrfase_sf_Poxvir"/>
</dbReference>
<dbReference type="InterPro" id="IPR024397">
    <property type="entry name" value="Poxvirus_polyA_pol_cat_C"/>
</dbReference>
<dbReference type="InterPro" id="IPR024398">
    <property type="entry name" value="Poxvirus_polyA_pol_cat_N"/>
</dbReference>
<dbReference type="InterPro" id="IPR038337">
    <property type="entry name" value="Poxvirus_polyA_pol_cat_N_sf"/>
</dbReference>
<dbReference type="Pfam" id="PF03296">
    <property type="entry name" value="Pox_polyA_pol"/>
    <property type="match status" value="1"/>
</dbReference>
<dbReference type="Pfam" id="PF12629">
    <property type="entry name" value="Pox_polyA_pol_C"/>
    <property type="match status" value="1"/>
</dbReference>
<dbReference type="Pfam" id="PF12630">
    <property type="entry name" value="Pox_polyA_pol_N"/>
    <property type="match status" value="1"/>
</dbReference>
<dbReference type="PIRSF" id="PIRSF015693">
    <property type="entry name" value="VAC-48L_nuct"/>
    <property type="match status" value="1"/>
</dbReference>
<dbReference type="SUPFAM" id="SSF160957">
    <property type="entry name" value="Poly(A) polymerase catalytic subunit-like"/>
    <property type="match status" value="1"/>
</dbReference>